<protein>
    <recommendedName>
        <fullName evidence="1">Large ribosomal subunit protein bL32</fullName>
    </recommendedName>
    <alternativeName>
        <fullName evidence="3">50S ribosomal protein L32</fullName>
    </alternativeName>
</protein>
<comment type="similarity">
    <text evidence="1">Belongs to the bacterial ribosomal protein bL32 family.</text>
</comment>
<dbReference type="EMBL" id="FM180568">
    <property type="protein sequence ID" value="CAS08729.1"/>
    <property type="molecule type" value="Genomic_DNA"/>
</dbReference>
<dbReference type="RefSeq" id="WP_000290727.1">
    <property type="nucleotide sequence ID" value="NC_011601.1"/>
</dbReference>
<dbReference type="SMR" id="B7UPA5"/>
<dbReference type="GeneID" id="93776319"/>
<dbReference type="KEGG" id="ecg:E2348C_1181"/>
<dbReference type="HOGENOM" id="CLU_129084_2_1_6"/>
<dbReference type="Proteomes" id="UP000008205">
    <property type="component" value="Chromosome"/>
</dbReference>
<dbReference type="GO" id="GO:0015934">
    <property type="term" value="C:large ribosomal subunit"/>
    <property type="evidence" value="ECO:0007669"/>
    <property type="project" value="InterPro"/>
</dbReference>
<dbReference type="GO" id="GO:0003735">
    <property type="term" value="F:structural constituent of ribosome"/>
    <property type="evidence" value="ECO:0007669"/>
    <property type="project" value="InterPro"/>
</dbReference>
<dbReference type="GO" id="GO:0006412">
    <property type="term" value="P:translation"/>
    <property type="evidence" value="ECO:0007669"/>
    <property type="project" value="UniProtKB-UniRule"/>
</dbReference>
<dbReference type="HAMAP" id="MF_00340">
    <property type="entry name" value="Ribosomal_bL32"/>
    <property type="match status" value="1"/>
</dbReference>
<dbReference type="InterPro" id="IPR002677">
    <property type="entry name" value="Ribosomal_bL32"/>
</dbReference>
<dbReference type="InterPro" id="IPR044957">
    <property type="entry name" value="Ribosomal_bL32_bact"/>
</dbReference>
<dbReference type="InterPro" id="IPR011332">
    <property type="entry name" value="Ribosomal_zn-bd"/>
</dbReference>
<dbReference type="NCBIfam" id="TIGR01031">
    <property type="entry name" value="rpmF_bact"/>
    <property type="match status" value="1"/>
</dbReference>
<dbReference type="PANTHER" id="PTHR35534">
    <property type="entry name" value="50S RIBOSOMAL PROTEIN L32"/>
    <property type="match status" value="1"/>
</dbReference>
<dbReference type="PANTHER" id="PTHR35534:SF1">
    <property type="entry name" value="LARGE RIBOSOMAL SUBUNIT PROTEIN BL32"/>
    <property type="match status" value="1"/>
</dbReference>
<dbReference type="Pfam" id="PF01783">
    <property type="entry name" value="Ribosomal_L32p"/>
    <property type="match status" value="1"/>
</dbReference>
<dbReference type="SUPFAM" id="SSF57829">
    <property type="entry name" value="Zn-binding ribosomal proteins"/>
    <property type="match status" value="1"/>
</dbReference>
<sequence length="57" mass="6446">MAVQQNKPTRSKRGMRRSHDALTAVTSLSVDKTSGEKHLRHHITADGYYRGRKVIAK</sequence>
<proteinExistence type="inferred from homology"/>
<organism>
    <name type="scientific">Escherichia coli O127:H6 (strain E2348/69 / EPEC)</name>
    <dbReference type="NCBI Taxonomy" id="574521"/>
    <lineage>
        <taxon>Bacteria</taxon>
        <taxon>Pseudomonadati</taxon>
        <taxon>Pseudomonadota</taxon>
        <taxon>Gammaproteobacteria</taxon>
        <taxon>Enterobacterales</taxon>
        <taxon>Enterobacteriaceae</taxon>
        <taxon>Escherichia</taxon>
    </lineage>
</organism>
<name>RL32_ECO27</name>
<gene>
    <name evidence="1" type="primary">rpmF</name>
    <name type="ordered locus">E2348C_1181</name>
</gene>
<reference key="1">
    <citation type="journal article" date="2009" name="J. Bacteriol.">
        <title>Complete genome sequence and comparative genome analysis of enteropathogenic Escherichia coli O127:H6 strain E2348/69.</title>
        <authorList>
            <person name="Iguchi A."/>
            <person name="Thomson N.R."/>
            <person name="Ogura Y."/>
            <person name="Saunders D."/>
            <person name="Ooka T."/>
            <person name="Henderson I.R."/>
            <person name="Harris D."/>
            <person name="Asadulghani M."/>
            <person name="Kurokawa K."/>
            <person name="Dean P."/>
            <person name="Kenny B."/>
            <person name="Quail M.A."/>
            <person name="Thurston S."/>
            <person name="Dougan G."/>
            <person name="Hayashi T."/>
            <person name="Parkhill J."/>
            <person name="Frankel G."/>
        </authorList>
    </citation>
    <scope>NUCLEOTIDE SEQUENCE [LARGE SCALE GENOMIC DNA]</scope>
    <source>
        <strain>E2348/69 / EPEC</strain>
    </source>
</reference>
<evidence type="ECO:0000255" key="1">
    <source>
        <dbReference type="HAMAP-Rule" id="MF_00340"/>
    </source>
</evidence>
<evidence type="ECO:0000256" key="2">
    <source>
        <dbReference type="SAM" id="MobiDB-lite"/>
    </source>
</evidence>
<evidence type="ECO:0000305" key="3"/>
<accession>B7UPA5</accession>
<feature type="chain" id="PRO_1000195975" description="Large ribosomal subunit protein bL32">
    <location>
        <begin position="1"/>
        <end position="57"/>
    </location>
</feature>
<feature type="region of interest" description="Disordered" evidence="2">
    <location>
        <begin position="1"/>
        <end position="38"/>
    </location>
</feature>
<keyword id="KW-1185">Reference proteome</keyword>
<keyword id="KW-0687">Ribonucleoprotein</keyword>
<keyword id="KW-0689">Ribosomal protein</keyword>